<proteinExistence type="inferred from homology"/>
<evidence type="ECO:0000255" key="1">
    <source>
        <dbReference type="HAMAP-Rule" id="MF_00051"/>
    </source>
</evidence>
<reference key="1">
    <citation type="submission" date="2008-03" db="EMBL/GenBank/DDBJ databases">
        <title>Complete sequence of Leptothrix cholodnii SP-6.</title>
        <authorList>
            <consortium name="US DOE Joint Genome Institute"/>
            <person name="Copeland A."/>
            <person name="Lucas S."/>
            <person name="Lapidus A."/>
            <person name="Glavina del Rio T."/>
            <person name="Dalin E."/>
            <person name="Tice H."/>
            <person name="Bruce D."/>
            <person name="Goodwin L."/>
            <person name="Pitluck S."/>
            <person name="Chertkov O."/>
            <person name="Brettin T."/>
            <person name="Detter J.C."/>
            <person name="Han C."/>
            <person name="Kuske C.R."/>
            <person name="Schmutz J."/>
            <person name="Larimer F."/>
            <person name="Land M."/>
            <person name="Hauser L."/>
            <person name="Kyrpides N."/>
            <person name="Lykidis A."/>
            <person name="Emerson D."/>
            <person name="Richardson P."/>
        </authorList>
    </citation>
    <scope>NUCLEOTIDE SEQUENCE [LARGE SCALE GENOMIC DNA]</scope>
    <source>
        <strain>ATCC 51168 / LMG 8142 / SP-6</strain>
    </source>
</reference>
<protein>
    <recommendedName>
        <fullName evidence="1">Serine hydroxymethyltransferase</fullName>
        <shortName evidence="1">SHMT</shortName>
        <shortName evidence="1">Serine methylase</shortName>
        <ecNumber evidence="1">2.1.2.1</ecNumber>
    </recommendedName>
</protein>
<organism>
    <name type="scientific">Leptothrix cholodnii (strain ATCC 51168 / LMG 8142 / SP-6)</name>
    <name type="common">Leptothrix discophora (strain SP-6)</name>
    <dbReference type="NCBI Taxonomy" id="395495"/>
    <lineage>
        <taxon>Bacteria</taxon>
        <taxon>Pseudomonadati</taxon>
        <taxon>Pseudomonadota</taxon>
        <taxon>Betaproteobacteria</taxon>
        <taxon>Burkholderiales</taxon>
        <taxon>Sphaerotilaceae</taxon>
        <taxon>Leptothrix</taxon>
    </lineage>
</organism>
<keyword id="KW-0028">Amino-acid biosynthesis</keyword>
<keyword id="KW-0963">Cytoplasm</keyword>
<keyword id="KW-0554">One-carbon metabolism</keyword>
<keyword id="KW-0663">Pyridoxal phosphate</keyword>
<keyword id="KW-1185">Reference proteome</keyword>
<keyword id="KW-0808">Transferase</keyword>
<accession>B1XYE7</accession>
<comment type="function">
    <text evidence="1">Catalyzes the reversible interconversion of serine and glycine with tetrahydrofolate (THF) serving as the one-carbon carrier. This reaction serves as the major source of one-carbon groups required for the biosynthesis of purines, thymidylate, methionine, and other important biomolecules. Also exhibits THF-independent aldolase activity toward beta-hydroxyamino acids, producing glycine and aldehydes, via a retro-aldol mechanism.</text>
</comment>
<comment type="catalytic activity">
    <reaction evidence="1">
        <text>(6R)-5,10-methylene-5,6,7,8-tetrahydrofolate + glycine + H2O = (6S)-5,6,7,8-tetrahydrofolate + L-serine</text>
        <dbReference type="Rhea" id="RHEA:15481"/>
        <dbReference type="ChEBI" id="CHEBI:15377"/>
        <dbReference type="ChEBI" id="CHEBI:15636"/>
        <dbReference type="ChEBI" id="CHEBI:33384"/>
        <dbReference type="ChEBI" id="CHEBI:57305"/>
        <dbReference type="ChEBI" id="CHEBI:57453"/>
        <dbReference type="EC" id="2.1.2.1"/>
    </reaction>
</comment>
<comment type="cofactor">
    <cofactor evidence="1">
        <name>pyridoxal 5'-phosphate</name>
        <dbReference type="ChEBI" id="CHEBI:597326"/>
    </cofactor>
</comment>
<comment type="pathway">
    <text evidence="1">One-carbon metabolism; tetrahydrofolate interconversion.</text>
</comment>
<comment type="pathway">
    <text evidence="1">Amino-acid biosynthesis; glycine biosynthesis; glycine from L-serine: step 1/1.</text>
</comment>
<comment type="subunit">
    <text evidence="1">Homodimer.</text>
</comment>
<comment type="subcellular location">
    <subcellularLocation>
        <location evidence="1">Cytoplasm</location>
    </subcellularLocation>
</comment>
<comment type="similarity">
    <text evidence="1">Belongs to the SHMT family.</text>
</comment>
<dbReference type="EC" id="2.1.2.1" evidence="1"/>
<dbReference type="EMBL" id="CP001013">
    <property type="protein sequence ID" value="ACB35192.1"/>
    <property type="molecule type" value="Genomic_DNA"/>
</dbReference>
<dbReference type="RefSeq" id="WP_012347946.1">
    <property type="nucleotide sequence ID" value="NC_010524.1"/>
</dbReference>
<dbReference type="SMR" id="B1XYE7"/>
<dbReference type="STRING" id="395495.Lcho_2927"/>
<dbReference type="KEGG" id="lch:Lcho_2927"/>
<dbReference type="eggNOG" id="COG0112">
    <property type="taxonomic scope" value="Bacteria"/>
</dbReference>
<dbReference type="HOGENOM" id="CLU_022477_2_1_4"/>
<dbReference type="OrthoDB" id="9803846at2"/>
<dbReference type="UniPathway" id="UPA00193"/>
<dbReference type="UniPathway" id="UPA00288">
    <property type="reaction ID" value="UER01023"/>
</dbReference>
<dbReference type="Proteomes" id="UP000001693">
    <property type="component" value="Chromosome"/>
</dbReference>
<dbReference type="GO" id="GO:0005829">
    <property type="term" value="C:cytosol"/>
    <property type="evidence" value="ECO:0007669"/>
    <property type="project" value="TreeGrafter"/>
</dbReference>
<dbReference type="GO" id="GO:0004372">
    <property type="term" value="F:glycine hydroxymethyltransferase activity"/>
    <property type="evidence" value="ECO:0007669"/>
    <property type="project" value="UniProtKB-UniRule"/>
</dbReference>
<dbReference type="GO" id="GO:0030170">
    <property type="term" value="F:pyridoxal phosphate binding"/>
    <property type="evidence" value="ECO:0007669"/>
    <property type="project" value="UniProtKB-UniRule"/>
</dbReference>
<dbReference type="GO" id="GO:0019264">
    <property type="term" value="P:glycine biosynthetic process from serine"/>
    <property type="evidence" value="ECO:0007669"/>
    <property type="project" value="UniProtKB-UniRule"/>
</dbReference>
<dbReference type="GO" id="GO:0035999">
    <property type="term" value="P:tetrahydrofolate interconversion"/>
    <property type="evidence" value="ECO:0007669"/>
    <property type="project" value="UniProtKB-UniRule"/>
</dbReference>
<dbReference type="CDD" id="cd00378">
    <property type="entry name" value="SHMT"/>
    <property type="match status" value="1"/>
</dbReference>
<dbReference type="FunFam" id="3.40.640.10:FF:000001">
    <property type="entry name" value="Serine hydroxymethyltransferase"/>
    <property type="match status" value="1"/>
</dbReference>
<dbReference type="FunFam" id="3.90.1150.10:FF:000003">
    <property type="entry name" value="Serine hydroxymethyltransferase"/>
    <property type="match status" value="1"/>
</dbReference>
<dbReference type="Gene3D" id="3.90.1150.10">
    <property type="entry name" value="Aspartate Aminotransferase, domain 1"/>
    <property type="match status" value="1"/>
</dbReference>
<dbReference type="Gene3D" id="3.40.640.10">
    <property type="entry name" value="Type I PLP-dependent aspartate aminotransferase-like (Major domain)"/>
    <property type="match status" value="1"/>
</dbReference>
<dbReference type="HAMAP" id="MF_00051">
    <property type="entry name" value="SHMT"/>
    <property type="match status" value="1"/>
</dbReference>
<dbReference type="InterPro" id="IPR015424">
    <property type="entry name" value="PyrdxlP-dep_Trfase"/>
</dbReference>
<dbReference type="InterPro" id="IPR015421">
    <property type="entry name" value="PyrdxlP-dep_Trfase_major"/>
</dbReference>
<dbReference type="InterPro" id="IPR015422">
    <property type="entry name" value="PyrdxlP-dep_Trfase_small"/>
</dbReference>
<dbReference type="InterPro" id="IPR001085">
    <property type="entry name" value="Ser_HO-MeTrfase"/>
</dbReference>
<dbReference type="InterPro" id="IPR049943">
    <property type="entry name" value="Ser_HO-MeTrfase-like"/>
</dbReference>
<dbReference type="InterPro" id="IPR019798">
    <property type="entry name" value="Ser_HO-MeTrfase_PLP_BS"/>
</dbReference>
<dbReference type="InterPro" id="IPR039429">
    <property type="entry name" value="SHMT-like_dom"/>
</dbReference>
<dbReference type="NCBIfam" id="NF000586">
    <property type="entry name" value="PRK00011.1"/>
    <property type="match status" value="1"/>
</dbReference>
<dbReference type="PANTHER" id="PTHR11680">
    <property type="entry name" value="SERINE HYDROXYMETHYLTRANSFERASE"/>
    <property type="match status" value="1"/>
</dbReference>
<dbReference type="PANTHER" id="PTHR11680:SF35">
    <property type="entry name" value="SERINE HYDROXYMETHYLTRANSFERASE 1"/>
    <property type="match status" value="1"/>
</dbReference>
<dbReference type="Pfam" id="PF00464">
    <property type="entry name" value="SHMT"/>
    <property type="match status" value="1"/>
</dbReference>
<dbReference type="PIRSF" id="PIRSF000412">
    <property type="entry name" value="SHMT"/>
    <property type="match status" value="1"/>
</dbReference>
<dbReference type="SUPFAM" id="SSF53383">
    <property type="entry name" value="PLP-dependent transferases"/>
    <property type="match status" value="1"/>
</dbReference>
<dbReference type="PROSITE" id="PS00096">
    <property type="entry name" value="SHMT"/>
    <property type="match status" value="1"/>
</dbReference>
<gene>
    <name evidence="1" type="primary">glyA</name>
    <name type="ordered locus">Lcho_2927</name>
</gene>
<sequence>MFDRATQTLAAIDPEITAAIDAEVRRQEEHIELIASENYTSPAVMAAQGSQLTNKYAEGYPGKRYYGGCEHVDVVEQLAIDRAKQLFGAQNANVQPNSGSQANQAVFFGLLQPGDTIMGLSLAEGGHLTHGMPLNMSGKWFKVVSYGLDAQEDIDYDAMERLAHEHKPKLIIAGASAFALRIDFERFAKVAKAVGAYFMVDMAHYAGLIAAGVYPNPVPFADVVTTTTHKTLRGPRGGLILMTDAVAKQINSAIFPGIQGGPLMHVIAGKAVAFQEALQPEFKAYQEQVVKNATAMAETLTARGLRIVSGRTESHVMLVDLRPKGITGKEAEALLGRAHITCNKNGIPNDPQKPMVTSGIRLGSPAMTTRGFKEEQAVLTANLIADVLEAPNDEAVLERVRAQVAQLTRDFPVYR</sequence>
<name>GLYA_LEPCP</name>
<feature type="chain" id="PRO_1000091555" description="Serine hydroxymethyltransferase">
    <location>
        <begin position="1"/>
        <end position="415"/>
    </location>
</feature>
<feature type="binding site" evidence="1">
    <location>
        <position position="122"/>
    </location>
    <ligand>
        <name>(6S)-5,6,7,8-tetrahydrofolate</name>
        <dbReference type="ChEBI" id="CHEBI:57453"/>
    </ligand>
</feature>
<feature type="binding site" evidence="1">
    <location>
        <begin position="126"/>
        <end position="128"/>
    </location>
    <ligand>
        <name>(6S)-5,6,7,8-tetrahydrofolate</name>
        <dbReference type="ChEBI" id="CHEBI:57453"/>
    </ligand>
</feature>
<feature type="site" description="Plays an important role in substrate specificity" evidence="1">
    <location>
        <position position="229"/>
    </location>
</feature>
<feature type="modified residue" description="N6-(pyridoxal phosphate)lysine" evidence="1">
    <location>
        <position position="230"/>
    </location>
</feature>